<sequence>MRILLTNDDGIQAVGIRHLYKGLIDAGHDVLVAAPISEQSAVGHAITIASPLRVKEFVENGFRGLGVSGTPADCVKLALTTLMQDKPDLVVSGINAGANVGVDILYSGTVSAATEGALMGYPAVAVSADDFAPVDLLEQGAYVADFIAGRPWEALAPRTVLNLNFPKRPIAETLPLALCPPTQAVYNDWYVTRQDPRGRDYHWLTGVIPPEALTPDSDRALLTKGHITLTPLRFELADAAAMASLAARLGLRTDV</sequence>
<name>SURE_SOLM1</name>
<evidence type="ECO:0000255" key="1">
    <source>
        <dbReference type="HAMAP-Rule" id="MF_00060"/>
    </source>
</evidence>
<keyword id="KW-0963">Cytoplasm</keyword>
<keyword id="KW-0378">Hydrolase</keyword>
<keyword id="KW-0479">Metal-binding</keyword>
<keyword id="KW-0547">Nucleotide-binding</keyword>
<reference key="1">
    <citation type="journal article" date="2009" name="Genome Res.">
        <title>Whole genome sequence of Desulfovibrio magneticus strain RS-1 revealed common gene clusters in magnetotactic bacteria.</title>
        <authorList>
            <person name="Nakazawa H."/>
            <person name="Arakaki A."/>
            <person name="Narita-Yamada S."/>
            <person name="Yashiro I."/>
            <person name="Jinno K."/>
            <person name="Aoki N."/>
            <person name="Tsuruyama A."/>
            <person name="Okamura Y."/>
            <person name="Tanikawa S."/>
            <person name="Fujita N."/>
            <person name="Takeyama H."/>
            <person name="Matsunaga T."/>
        </authorList>
    </citation>
    <scope>NUCLEOTIDE SEQUENCE [LARGE SCALE GENOMIC DNA]</scope>
    <source>
        <strain>ATCC 700980 / DSM 13731 / RS-1</strain>
    </source>
</reference>
<feature type="chain" id="PRO_1000202365" description="5'-nucleotidase SurE">
    <location>
        <begin position="1"/>
        <end position="255"/>
    </location>
</feature>
<feature type="binding site" evidence="1">
    <location>
        <position position="8"/>
    </location>
    <ligand>
        <name>a divalent metal cation</name>
        <dbReference type="ChEBI" id="CHEBI:60240"/>
    </ligand>
</feature>
<feature type="binding site" evidence="1">
    <location>
        <position position="9"/>
    </location>
    <ligand>
        <name>a divalent metal cation</name>
        <dbReference type="ChEBI" id="CHEBI:60240"/>
    </ligand>
</feature>
<feature type="binding site" evidence="1">
    <location>
        <position position="40"/>
    </location>
    <ligand>
        <name>a divalent metal cation</name>
        <dbReference type="ChEBI" id="CHEBI:60240"/>
    </ligand>
</feature>
<feature type="binding site" evidence="1">
    <location>
        <position position="95"/>
    </location>
    <ligand>
        <name>a divalent metal cation</name>
        <dbReference type="ChEBI" id="CHEBI:60240"/>
    </ligand>
</feature>
<accession>C4XNX3</accession>
<gene>
    <name evidence="1" type="primary">surE</name>
    <name type="ordered locus">DMR_39830</name>
</gene>
<proteinExistence type="inferred from homology"/>
<organism>
    <name type="scientific">Solidesulfovibrio magneticus (strain ATCC 700980 / DSM 13731 / RS-1)</name>
    <name type="common">Desulfovibrio magneticus</name>
    <dbReference type="NCBI Taxonomy" id="573370"/>
    <lineage>
        <taxon>Bacteria</taxon>
        <taxon>Pseudomonadati</taxon>
        <taxon>Thermodesulfobacteriota</taxon>
        <taxon>Desulfovibrionia</taxon>
        <taxon>Desulfovibrionales</taxon>
        <taxon>Desulfovibrionaceae</taxon>
        <taxon>Solidesulfovibrio</taxon>
    </lineage>
</organism>
<dbReference type="EC" id="3.1.3.5" evidence="1"/>
<dbReference type="EMBL" id="AP010904">
    <property type="protein sequence ID" value="BAH77474.1"/>
    <property type="molecule type" value="Genomic_DNA"/>
</dbReference>
<dbReference type="RefSeq" id="WP_015862609.1">
    <property type="nucleotide sequence ID" value="NC_012796.1"/>
</dbReference>
<dbReference type="SMR" id="C4XNX3"/>
<dbReference type="STRING" id="573370.DMR_39830"/>
<dbReference type="KEGG" id="dma:DMR_39830"/>
<dbReference type="eggNOG" id="COG0496">
    <property type="taxonomic scope" value="Bacteria"/>
</dbReference>
<dbReference type="HOGENOM" id="CLU_045192_1_2_7"/>
<dbReference type="OrthoDB" id="9780815at2"/>
<dbReference type="Proteomes" id="UP000009071">
    <property type="component" value="Chromosome"/>
</dbReference>
<dbReference type="GO" id="GO:0005737">
    <property type="term" value="C:cytoplasm"/>
    <property type="evidence" value="ECO:0007669"/>
    <property type="project" value="UniProtKB-SubCell"/>
</dbReference>
<dbReference type="GO" id="GO:0008253">
    <property type="term" value="F:5'-nucleotidase activity"/>
    <property type="evidence" value="ECO:0007669"/>
    <property type="project" value="UniProtKB-UniRule"/>
</dbReference>
<dbReference type="GO" id="GO:0046872">
    <property type="term" value="F:metal ion binding"/>
    <property type="evidence" value="ECO:0007669"/>
    <property type="project" value="UniProtKB-UniRule"/>
</dbReference>
<dbReference type="GO" id="GO:0000166">
    <property type="term" value="F:nucleotide binding"/>
    <property type="evidence" value="ECO:0007669"/>
    <property type="project" value="UniProtKB-KW"/>
</dbReference>
<dbReference type="Gene3D" id="3.40.1210.10">
    <property type="entry name" value="Survival protein SurE-like phosphatase/nucleotidase"/>
    <property type="match status" value="1"/>
</dbReference>
<dbReference type="HAMAP" id="MF_00060">
    <property type="entry name" value="SurE"/>
    <property type="match status" value="1"/>
</dbReference>
<dbReference type="InterPro" id="IPR030048">
    <property type="entry name" value="SurE"/>
</dbReference>
<dbReference type="InterPro" id="IPR002828">
    <property type="entry name" value="SurE-like_Pase/nucleotidase"/>
</dbReference>
<dbReference type="InterPro" id="IPR036523">
    <property type="entry name" value="SurE-like_sf"/>
</dbReference>
<dbReference type="NCBIfam" id="TIGR00087">
    <property type="entry name" value="surE"/>
    <property type="match status" value="1"/>
</dbReference>
<dbReference type="PANTHER" id="PTHR30457">
    <property type="entry name" value="5'-NUCLEOTIDASE SURE"/>
    <property type="match status" value="1"/>
</dbReference>
<dbReference type="PANTHER" id="PTHR30457:SF0">
    <property type="entry name" value="PHOSPHATASE, PUTATIVE (AFU_ORTHOLOGUE AFUA_4G01070)-RELATED"/>
    <property type="match status" value="1"/>
</dbReference>
<dbReference type="Pfam" id="PF01975">
    <property type="entry name" value="SurE"/>
    <property type="match status" value="1"/>
</dbReference>
<dbReference type="SUPFAM" id="SSF64167">
    <property type="entry name" value="SurE-like"/>
    <property type="match status" value="1"/>
</dbReference>
<protein>
    <recommendedName>
        <fullName evidence="1">5'-nucleotidase SurE</fullName>
        <ecNumber evidence="1">3.1.3.5</ecNumber>
    </recommendedName>
    <alternativeName>
        <fullName evidence="1">Nucleoside 5'-monophosphate phosphohydrolase</fullName>
    </alternativeName>
</protein>
<comment type="function">
    <text evidence="1">Nucleotidase that shows phosphatase activity on nucleoside 5'-monophosphates.</text>
</comment>
<comment type="catalytic activity">
    <reaction evidence="1">
        <text>a ribonucleoside 5'-phosphate + H2O = a ribonucleoside + phosphate</text>
        <dbReference type="Rhea" id="RHEA:12484"/>
        <dbReference type="ChEBI" id="CHEBI:15377"/>
        <dbReference type="ChEBI" id="CHEBI:18254"/>
        <dbReference type="ChEBI" id="CHEBI:43474"/>
        <dbReference type="ChEBI" id="CHEBI:58043"/>
        <dbReference type="EC" id="3.1.3.5"/>
    </reaction>
</comment>
<comment type="cofactor">
    <cofactor evidence="1">
        <name>a divalent metal cation</name>
        <dbReference type="ChEBI" id="CHEBI:60240"/>
    </cofactor>
    <text evidence="1">Binds 1 divalent metal cation per subunit.</text>
</comment>
<comment type="subcellular location">
    <subcellularLocation>
        <location evidence="1">Cytoplasm</location>
    </subcellularLocation>
</comment>
<comment type="similarity">
    <text evidence="1">Belongs to the SurE nucleotidase family.</text>
</comment>